<organism>
    <name type="scientific">Aspergillus fumigatus (strain ATCC MYA-4609 / CBS 101355 / FGSC A1100 / Af293)</name>
    <name type="common">Neosartorya fumigata</name>
    <dbReference type="NCBI Taxonomy" id="330879"/>
    <lineage>
        <taxon>Eukaryota</taxon>
        <taxon>Fungi</taxon>
        <taxon>Dikarya</taxon>
        <taxon>Ascomycota</taxon>
        <taxon>Pezizomycotina</taxon>
        <taxon>Eurotiomycetes</taxon>
        <taxon>Eurotiomycetidae</taxon>
        <taxon>Eurotiales</taxon>
        <taxon>Aspergillaceae</taxon>
        <taxon>Aspergillus</taxon>
        <taxon>Aspergillus subgen. Fumigati</taxon>
    </lineage>
</organism>
<protein>
    <recommendedName>
        <fullName evidence="3">Class I hydrophobin rodE</fullName>
    </recommendedName>
    <alternativeName>
        <fullName evidence="3">Rodlet protein E</fullName>
    </alternativeName>
</protein>
<evidence type="ECO:0000250" key="1">
    <source>
        <dbReference type="UniProtKB" id="Q04571"/>
    </source>
</evidence>
<evidence type="ECO:0000269" key="2">
    <source>
    </source>
</evidence>
<evidence type="ECO:0000303" key="3">
    <source>
    </source>
</evidence>
<evidence type="ECO:0000305" key="4"/>
<gene>
    <name evidence="3" type="primary">rodE</name>
    <name type="ORF">AFUA_8G05890</name>
</gene>
<keyword id="KW-1015">Disulfide bond</keyword>
<keyword id="KW-1185">Reference proteome</keyword>
<feature type="chain" id="PRO_0000462327" description="Class I hydrophobin rodE">
    <location>
        <begin position="1"/>
        <end position="145"/>
    </location>
</feature>
<feature type="disulfide bond" evidence="1">
    <location>
        <begin position="43"/>
        <end position="126"/>
    </location>
</feature>
<feature type="disulfide bond" evidence="1">
    <location>
        <begin position="59"/>
        <end position="120"/>
    </location>
</feature>
<feature type="disulfide bond" evidence="1">
    <location>
        <begin position="60"/>
        <end position="95"/>
    </location>
</feature>
<feature type="disulfide bond" evidence="1">
    <location>
        <begin position="127"/>
        <end position="140"/>
    </location>
</feature>
<sequence>MHPRPEHLSPTLNHNHRLKLKQPATTSRMLARTILATLVSAACFATVNAQTCSATNAVCCQQLQDPDNLNADALNLLRLLNINPNTLTGAVGLTCKRLTEACFACLLLTRPGTSLVSGSCNANAACCTGNNYNGLIVLGCTQIQV</sequence>
<accession>Q4WC31</accession>
<reference key="1">
    <citation type="journal article" date="2005" name="Nature">
        <title>Genomic sequence of the pathogenic and allergenic filamentous fungus Aspergillus fumigatus.</title>
        <authorList>
            <person name="Nierman W.C."/>
            <person name="Pain A."/>
            <person name="Anderson M.J."/>
            <person name="Wortman J.R."/>
            <person name="Kim H.S."/>
            <person name="Arroyo J."/>
            <person name="Berriman M."/>
            <person name="Abe K."/>
            <person name="Archer D.B."/>
            <person name="Bermejo C."/>
            <person name="Bennett J.W."/>
            <person name="Bowyer P."/>
            <person name="Chen D."/>
            <person name="Collins M."/>
            <person name="Coulsen R."/>
            <person name="Davies R."/>
            <person name="Dyer P.S."/>
            <person name="Farman M.L."/>
            <person name="Fedorova N."/>
            <person name="Fedorova N.D."/>
            <person name="Feldblyum T.V."/>
            <person name="Fischer R."/>
            <person name="Fosker N."/>
            <person name="Fraser A."/>
            <person name="Garcia J.L."/>
            <person name="Garcia M.J."/>
            <person name="Goble A."/>
            <person name="Goldman G.H."/>
            <person name="Gomi K."/>
            <person name="Griffith-Jones S."/>
            <person name="Gwilliam R."/>
            <person name="Haas B.J."/>
            <person name="Haas H."/>
            <person name="Harris D.E."/>
            <person name="Horiuchi H."/>
            <person name="Huang J."/>
            <person name="Humphray S."/>
            <person name="Jimenez J."/>
            <person name="Keller N."/>
            <person name="Khouri H."/>
            <person name="Kitamoto K."/>
            <person name="Kobayashi T."/>
            <person name="Konzack S."/>
            <person name="Kulkarni R."/>
            <person name="Kumagai T."/>
            <person name="Lafton A."/>
            <person name="Latge J.-P."/>
            <person name="Li W."/>
            <person name="Lord A."/>
            <person name="Lu C."/>
            <person name="Majoros W.H."/>
            <person name="May G.S."/>
            <person name="Miller B.L."/>
            <person name="Mohamoud Y."/>
            <person name="Molina M."/>
            <person name="Monod M."/>
            <person name="Mouyna I."/>
            <person name="Mulligan S."/>
            <person name="Murphy L.D."/>
            <person name="O'Neil S."/>
            <person name="Paulsen I."/>
            <person name="Penalva M.A."/>
            <person name="Pertea M."/>
            <person name="Price C."/>
            <person name="Pritchard B.L."/>
            <person name="Quail M.A."/>
            <person name="Rabbinowitsch E."/>
            <person name="Rawlins N."/>
            <person name="Rajandream M.A."/>
            <person name="Reichard U."/>
            <person name="Renauld H."/>
            <person name="Robson G.D."/>
            <person name="Rodriguez de Cordoba S."/>
            <person name="Rodriguez-Pena J.M."/>
            <person name="Ronning C.M."/>
            <person name="Rutter S."/>
            <person name="Salzberg S.L."/>
            <person name="Sanchez M."/>
            <person name="Sanchez-Ferrero J.C."/>
            <person name="Saunders D."/>
            <person name="Seeger K."/>
            <person name="Squares R."/>
            <person name="Squares S."/>
            <person name="Takeuchi M."/>
            <person name="Tekaia F."/>
            <person name="Turner G."/>
            <person name="Vazquez de Aldana C.R."/>
            <person name="Weidman J."/>
            <person name="White O."/>
            <person name="Woodward J.R."/>
            <person name="Yu J.-H."/>
            <person name="Fraser C.M."/>
            <person name="Galagan J.E."/>
            <person name="Asai K."/>
            <person name="Machida M."/>
            <person name="Hall N."/>
            <person name="Barrell B.G."/>
            <person name="Denning D.W."/>
        </authorList>
    </citation>
    <scope>NUCLEOTIDE SEQUENCE [LARGE SCALE GENOMIC DNA]</scope>
    <source>
        <strain>ATCC MYA-4609 / CBS 101355 / FGSC A1100 / Af293</strain>
    </source>
</reference>
<reference key="2">
    <citation type="journal article" date="2017" name="J. Fungi">
        <title>Role of Hydrophobins in Aspergillus fumigatus.</title>
        <authorList>
            <person name="Valsecchi I."/>
            <person name="Dupres V."/>
            <person name="Stephen-Victor E."/>
            <person name="Guijarro J.I."/>
            <person name="Gibbons J."/>
            <person name="Beau R."/>
            <person name="Bayry J."/>
            <person name="Coppee J.Y."/>
            <person name="Lafont F."/>
            <person name="Latge J.P."/>
            <person name="Beauvais A."/>
        </authorList>
    </citation>
    <scope>FUNCTION</scope>
    <scope>DOMAIN</scope>
    <scope>INDUCTION</scope>
</reference>
<comment type="function">
    <text evidence="2 4">Aerial growth, conidiation, and dispersal of filamentous fungi in the environment rely upon a capability of their secreting small amphipathic proteins called hydrophobins (HPBs) with low sequence identity. Class I can self-assemble into an outermost layer of rodlet bundles on aerial cell surfaces, conferring cellular hydrophobicity that supports fungal growth, development and dispersal; whereas Class II form highly ordered films at water-air interfaces through intermolecular interactions but contribute nothing to the rodlet structure (Probable). RodE is a class I hydrophobin that, unlike rodA, is not required for rodlet formation (PubMed:29371496).</text>
</comment>
<comment type="subunit">
    <text evidence="1">Self-assembles to form functional amyloid fibrils called rodlets. Self-assembly into fibrillar rodlets occurs spontaneously at hydrophobic:hydrophilic interfaces and the rodlets further associate laterally to form amphipathic monolayers.</text>
</comment>
<comment type="induction">
    <text evidence="2">No expression is detected in sporulating cultures, nor in vegetative cultures or during infection.</text>
</comment>
<comment type="domain">
    <text evidence="2">RodE has three extra-cysteines, two of them within the characteristic hydrophobin Cys pattern, and no signal peptide; however, its hydrophobicity profile is conserved with class I hydrophobins represented by rodA, rodB, and rodC.</text>
</comment>
<comment type="similarity">
    <text evidence="4">Belongs to the fungal hydrophobin family.</text>
</comment>
<dbReference type="EMBL" id="AAHF01000013">
    <property type="protein sequence ID" value="EAL85353.1"/>
    <property type="molecule type" value="Genomic_DNA"/>
</dbReference>
<dbReference type="RefSeq" id="XP_747391.1">
    <property type="nucleotide sequence ID" value="XM_742298.1"/>
</dbReference>
<dbReference type="STRING" id="330879.Q4WC31"/>
<dbReference type="EnsemblFungi" id="EAL85353">
    <property type="protein sequence ID" value="EAL85353"/>
    <property type="gene ID" value="AFUA_8G05890"/>
</dbReference>
<dbReference type="GeneID" id="3504864"/>
<dbReference type="KEGG" id="afm:AFUA_8G05890"/>
<dbReference type="VEuPathDB" id="FungiDB:Afu8g05890"/>
<dbReference type="eggNOG" id="ENOG502T10M">
    <property type="taxonomic scope" value="Eukaryota"/>
</dbReference>
<dbReference type="HOGENOM" id="CLU_1786449_0_0_1"/>
<dbReference type="InParanoid" id="Q4WC31"/>
<dbReference type="OMA" id="IVLGCTQ"/>
<dbReference type="OrthoDB" id="4503395at2759"/>
<dbReference type="Proteomes" id="UP000002530">
    <property type="component" value="Chromosome 8"/>
</dbReference>
<dbReference type="GO" id="GO:0005576">
    <property type="term" value="C:extracellular region"/>
    <property type="evidence" value="ECO:0007669"/>
    <property type="project" value="UniProtKB-KW"/>
</dbReference>
<dbReference type="GO" id="GO:0009277">
    <property type="term" value="C:fungal-type cell wall"/>
    <property type="evidence" value="ECO:0007669"/>
    <property type="project" value="InterPro"/>
</dbReference>
<dbReference type="GO" id="GO:0005199">
    <property type="term" value="F:structural constituent of cell wall"/>
    <property type="evidence" value="ECO:0007669"/>
    <property type="project" value="InterPro"/>
</dbReference>
<dbReference type="CDD" id="cd23507">
    <property type="entry name" value="hydrophobin_I"/>
    <property type="match status" value="1"/>
</dbReference>
<dbReference type="InterPro" id="IPR001338">
    <property type="entry name" value="Hydrophobin"/>
</dbReference>
<dbReference type="Pfam" id="PF01185">
    <property type="entry name" value="Hydrophobin"/>
    <property type="match status" value="1"/>
</dbReference>
<dbReference type="SMART" id="SM00075">
    <property type="entry name" value="HYDRO"/>
    <property type="match status" value="1"/>
</dbReference>
<name>RODE_ASPFU</name>
<proteinExistence type="evidence at transcript level"/>